<organism>
    <name type="scientific">Methanocaldococcus jannaschii (strain ATCC 43067 / DSM 2661 / JAL-1 / JCM 10045 / NBRC 100440)</name>
    <name type="common">Methanococcus jannaschii</name>
    <dbReference type="NCBI Taxonomy" id="243232"/>
    <lineage>
        <taxon>Archaea</taxon>
        <taxon>Methanobacteriati</taxon>
        <taxon>Methanobacteriota</taxon>
        <taxon>Methanomada group</taxon>
        <taxon>Methanococci</taxon>
        <taxon>Methanococcales</taxon>
        <taxon>Methanocaldococcaceae</taxon>
        <taxon>Methanocaldococcus</taxon>
    </lineage>
</organism>
<comment type="function">
    <text evidence="1">Probably part of an ABC transporter complex. Responsible for energy coupling to the transport system (By similarity).</text>
</comment>
<comment type="subcellular location">
    <subcellularLocation>
        <location evidence="1">Cell membrane</location>
        <topology evidence="1">Peripheral membrane protein</topology>
    </subcellularLocation>
</comment>
<comment type="similarity">
    <text evidence="3">Belongs to the ABC transporter superfamily.</text>
</comment>
<gene>
    <name type="ordered locus">MJ1572</name>
</gene>
<feature type="chain" id="PRO_0000092142" description="Putative ABC transporter ATP-binding protein MJ1572">
    <location>
        <begin position="1"/>
        <end position="278"/>
    </location>
</feature>
<feature type="domain" description="ABC transporter" evidence="2">
    <location>
        <begin position="5"/>
        <end position="242"/>
    </location>
</feature>
<feature type="binding site" evidence="2">
    <location>
        <begin position="38"/>
        <end position="45"/>
    </location>
    <ligand>
        <name>ATP</name>
        <dbReference type="ChEBI" id="CHEBI:30616"/>
    </ligand>
</feature>
<protein>
    <recommendedName>
        <fullName>Putative ABC transporter ATP-binding protein MJ1572</fullName>
        <ecNumber>7.-.-.-</ecNumber>
    </recommendedName>
</protein>
<proteinExistence type="inferred from homology"/>
<sequence>MKEIYRLVDVSYKYPNGSIALDNVNLNIYKNEVVAILGPNGAGKTTLLKILDGLVFPDKGEVYFEGKKLTDEILRDKELMKEFRRKVGFVFQNPDVMLFNPTVWDEVAFSPLHLYSKEKAIEVTDKTLKDMKIYHLKDRHPYNLSGGEKKKVSISCILSVEPEVILMDEPTSALDPKSRAEIMNLIKSFKECGKTVVLVTHDLNLACLADRCYVLNKKVIFEGKVKDLFSLNLDELNLDVPEISKLFIKLKNMGYNINEIPVTLDEAVNIISKLFQKY</sequence>
<keyword id="KW-0067">ATP-binding</keyword>
<keyword id="KW-1003">Cell membrane</keyword>
<keyword id="KW-0472">Membrane</keyword>
<keyword id="KW-0547">Nucleotide-binding</keyword>
<keyword id="KW-1185">Reference proteome</keyword>
<keyword id="KW-1278">Translocase</keyword>
<keyword id="KW-0813">Transport</keyword>
<name>Y1572_METJA</name>
<evidence type="ECO:0000250" key="1"/>
<evidence type="ECO:0000255" key="2">
    <source>
        <dbReference type="PROSITE-ProRule" id="PRU00434"/>
    </source>
</evidence>
<evidence type="ECO:0000305" key="3"/>
<dbReference type="EC" id="7.-.-.-"/>
<dbReference type="EMBL" id="L77117">
    <property type="protein sequence ID" value="AAB99589.1"/>
    <property type="molecule type" value="Genomic_DNA"/>
</dbReference>
<dbReference type="PIR" id="C64496">
    <property type="entry name" value="C64496"/>
</dbReference>
<dbReference type="RefSeq" id="WP_010871096.1">
    <property type="nucleotide sequence ID" value="NC_000909.1"/>
</dbReference>
<dbReference type="SMR" id="Q58967"/>
<dbReference type="FunCoup" id="Q58967">
    <property type="interactions" value="32"/>
</dbReference>
<dbReference type="STRING" id="243232.MJ_1572"/>
<dbReference type="PaxDb" id="243232-MJ_1572"/>
<dbReference type="EnsemblBacteria" id="AAB99589">
    <property type="protein sequence ID" value="AAB99589"/>
    <property type="gene ID" value="MJ_1572"/>
</dbReference>
<dbReference type="GeneID" id="1452480"/>
<dbReference type="KEGG" id="mja:MJ_1572"/>
<dbReference type="eggNOG" id="arCOG00202">
    <property type="taxonomic scope" value="Archaea"/>
</dbReference>
<dbReference type="HOGENOM" id="CLU_000604_1_22_2"/>
<dbReference type="InParanoid" id="Q58967"/>
<dbReference type="OrthoDB" id="18209at2157"/>
<dbReference type="PhylomeDB" id="Q58967"/>
<dbReference type="Proteomes" id="UP000000805">
    <property type="component" value="Chromosome"/>
</dbReference>
<dbReference type="GO" id="GO:0043190">
    <property type="term" value="C:ATP-binding cassette (ABC) transporter complex"/>
    <property type="evidence" value="ECO:0000318"/>
    <property type="project" value="GO_Central"/>
</dbReference>
<dbReference type="GO" id="GO:0005524">
    <property type="term" value="F:ATP binding"/>
    <property type="evidence" value="ECO:0000318"/>
    <property type="project" value="GO_Central"/>
</dbReference>
<dbReference type="GO" id="GO:0016887">
    <property type="term" value="F:ATP hydrolysis activity"/>
    <property type="evidence" value="ECO:0007669"/>
    <property type="project" value="InterPro"/>
</dbReference>
<dbReference type="GO" id="GO:0042626">
    <property type="term" value="F:ATPase-coupled transmembrane transporter activity"/>
    <property type="evidence" value="ECO:0000318"/>
    <property type="project" value="GO_Central"/>
</dbReference>
<dbReference type="CDD" id="cd03225">
    <property type="entry name" value="ABC_cobalt_CbiO_domain1"/>
    <property type="match status" value="1"/>
</dbReference>
<dbReference type="FunFam" id="3.40.50.300:FF:000224">
    <property type="entry name" value="Energy-coupling factor transporter ATP-binding protein EcfA"/>
    <property type="match status" value="1"/>
</dbReference>
<dbReference type="Gene3D" id="3.40.50.300">
    <property type="entry name" value="P-loop containing nucleotide triphosphate hydrolases"/>
    <property type="match status" value="1"/>
</dbReference>
<dbReference type="InterPro" id="IPR003593">
    <property type="entry name" value="AAA+_ATPase"/>
</dbReference>
<dbReference type="InterPro" id="IPR003439">
    <property type="entry name" value="ABC_transporter-like_ATP-bd"/>
</dbReference>
<dbReference type="InterPro" id="IPR017871">
    <property type="entry name" value="ABC_transporter-like_CS"/>
</dbReference>
<dbReference type="InterPro" id="IPR015856">
    <property type="entry name" value="ABC_transpr_CbiO/EcfA_su"/>
</dbReference>
<dbReference type="InterPro" id="IPR050095">
    <property type="entry name" value="ECF_ABC_transporter_ATP-bd"/>
</dbReference>
<dbReference type="InterPro" id="IPR027417">
    <property type="entry name" value="P-loop_NTPase"/>
</dbReference>
<dbReference type="PANTHER" id="PTHR43553:SF27">
    <property type="entry name" value="ENERGY-COUPLING FACTOR TRANSPORTER ATP-BINDING PROTEIN ECFA2"/>
    <property type="match status" value="1"/>
</dbReference>
<dbReference type="PANTHER" id="PTHR43553">
    <property type="entry name" value="HEAVY METAL TRANSPORTER"/>
    <property type="match status" value="1"/>
</dbReference>
<dbReference type="Pfam" id="PF00005">
    <property type="entry name" value="ABC_tran"/>
    <property type="match status" value="1"/>
</dbReference>
<dbReference type="SMART" id="SM00382">
    <property type="entry name" value="AAA"/>
    <property type="match status" value="1"/>
</dbReference>
<dbReference type="SUPFAM" id="SSF52540">
    <property type="entry name" value="P-loop containing nucleoside triphosphate hydrolases"/>
    <property type="match status" value="1"/>
</dbReference>
<dbReference type="PROSITE" id="PS00211">
    <property type="entry name" value="ABC_TRANSPORTER_1"/>
    <property type="match status" value="1"/>
</dbReference>
<dbReference type="PROSITE" id="PS50893">
    <property type="entry name" value="ABC_TRANSPORTER_2"/>
    <property type="match status" value="1"/>
</dbReference>
<reference key="1">
    <citation type="journal article" date="1996" name="Science">
        <title>Complete genome sequence of the methanogenic archaeon, Methanococcus jannaschii.</title>
        <authorList>
            <person name="Bult C.J."/>
            <person name="White O."/>
            <person name="Olsen G.J."/>
            <person name="Zhou L."/>
            <person name="Fleischmann R.D."/>
            <person name="Sutton G.G."/>
            <person name="Blake J.A."/>
            <person name="FitzGerald L.M."/>
            <person name="Clayton R.A."/>
            <person name="Gocayne J.D."/>
            <person name="Kerlavage A.R."/>
            <person name="Dougherty B.A."/>
            <person name="Tomb J.-F."/>
            <person name="Adams M.D."/>
            <person name="Reich C.I."/>
            <person name="Overbeek R."/>
            <person name="Kirkness E.F."/>
            <person name="Weinstock K.G."/>
            <person name="Merrick J.M."/>
            <person name="Glodek A."/>
            <person name="Scott J.L."/>
            <person name="Geoghagen N.S.M."/>
            <person name="Weidman J.F."/>
            <person name="Fuhrmann J.L."/>
            <person name="Nguyen D."/>
            <person name="Utterback T.R."/>
            <person name="Kelley J.M."/>
            <person name="Peterson J.D."/>
            <person name="Sadow P.W."/>
            <person name="Hanna M.C."/>
            <person name="Cotton M.D."/>
            <person name="Roberts K.M."/>
            <person name="Hurst M.A."/>
            <person name="Kaine B.P."/>
            <person name="Borodovsky M."/>
            <person name="Klenk H.-P."/>
            <person name="Fraser C.M."/>
            <person name="Smith H.O."/>
            <person name="Woese C.R."/>
            <person name="Venter J.C."/>
        </authorList>
    </citation>
    <scope>NUCLEOTIDE SEQUENCE [LARGE SCALE GENOMIC DNA]</scope>
    <source>
        <strain>ATCC 43067 / DSM 2661 / JAL-1 / JCM 10045 / NBRC 100440</strain>
    </source>
</reference>
<accession>Q58967</accession>